<evidence type="ECO:0000255" key="1">
    <source>
        <dbReference type="HAMAP-Rule" id="MF_00453"/>
    </source>
</evidence>
<gene>
    <name evidence="1" type="primary">pckA</name>
    <name type="ordered locus">NT01EI_3643</name>
</gene>
<proteinExistence type="inferred from homology"/>
<reference key="1">
    <citation type="submission" date="2009-03" db="EMBL/GenBank/DDBJ databases">
        <title>Complete genome sequence of Edwardsiella ictaluri 93-146.</title>
        <authorList>
            <person name="Williams M.L."/>
            <person name="Gillaspy A.F."/>
            <person name="Dyer D.W."/>
            <person name="Thune R.L."/>
            <person name="Waldbieser G.C."/>
            <person name="Schuster S.C."/>
            <person name="Gipson J."/>
            <person name="Zaitshik J."/>
            <person name="Landry C."/>
            <person name="Lawrence M.L."/>
        </authorList>
    </citation>
    <scope>NUCLEOTIDE SEQUENCE [LARGE SCALE GENOMIC DNA]</scope>
    <source>
        <strain>93-146</strain>
    </source>
</reference>
<dbReference type="EC" id="4.1.1.49" evidence="1"/>
<dbReference type="EMBL" id="CP001600">
    <property type="protein sequence ID" value="ACR70771.1"/>
    <property type="molecule type" value="Genomic_DNA"/>
</dbReference>
<dbReference type="RefSeq" id="WP_015872812.1">
    <property type="nucleotide sequence ID" value="NZ_CP169062.1"/>
</dbReference>
<dbReference type="SMR" id="C5BGS4"/>
<dbReference type="STRING" id="67780.B6E78_09870"/>
<dbReference type="GeneID" id="69540484"/>
<dbReference type="KEGG" id="eic:NT01EI_3643"/>
<dbReference type="PATRIC" id="fig|634503.3.peg.3248"/>
<dbReference type="HOGENOM" id="CLU_018247_0_1_6"/>
<dbReference type="OrthoDB" id="9806325at2"/>
<dbReference type="UniPathway" id="UPA00138"/>
<dbReference type="Proteomes" id="UP000001485">
    <property type="component" value="Chromosome"/>
</dbReference>
<dbReference type="GO" id="GO:0005829">
    <property type="term" value="C:cytosol"/>
    <property type="evidence" value="ECO:0007669"/>
    <property type="project" value="TreeGrafter"/>
</dbReference>
<dbReference type="GO" id="GO:0005524">
    <property type="term" value="F:ATP binding"/>
    <property type="evidence" value="ECO:0007669"/>
    <property type="project" value="UniProtKB-UniRule"/>
</dbReference>
<dbReference type="GO" id="GO:0046872">
    <property type="term" value="F:metal ion binding"/>
    <property type="evidence" value="ECO:0007669"/>
    <property type="project" value="UniProtKB-KW"/>
</dbReference>
<dbReference type="GO" id="GO:0004612">
    <property type="term" value="F:phosphoenolpyruvate carboxykinase (ATP) activity"/>
    <property type="evidence" value="ECO:0007669"/>
    <property type="project" value="UniProtKB-UniRule"/>
</dbReference>
<dbReference type="GO" id="GO:0006094">
    <property type="term" value="P:gluconeogenesis"/>
    <property type="evidence" value="ECO:0007669"/>
    <property type="project" value="UniProtKB-UniRule"/>
</dbReference>
<dbReference type="CDD" id="cd00484">
    <property type="entry name" value="PEPCK_ATP"/>
    <property type="match status" value="1"/>
</dbReference>
<dbReference type="FunFam" id="3.40.449.10:FF:000001">
    <property type="entry name" value="Phosphoenolpyruvate carboxykinase (ATP)"/>
    <property type="match status" value="1"/>
</dbReference>
<dbReference type="Gene3D" id="3.90.228.20">
    <property type="match status" value="1"/>
</dbReference>
<dbReference type="Gene3D" id="3.40.449.10">
    <property type="entry name" value="Phosphoenolpyruvate Carboxykinase, domain 1"/>
    <property type="match status" value="1"/>
</dbReference>
<dbReference type="Gene3D" id="2.170.8.10">
    <property type="entry name" value="Phosphoenolpyruvate Carboxykinase, domain 2"/>
    <property type="match status" value="1"/>
</dbReference>
<dbReference type="HAMAP" id="MF_00453">
    <property type="entry name" value="PEPCK_ATP"/>
    <property type="match status" value="1"/>
</dbReference>
<dbReference type="InterPro" id="IPR001272">
    <property type="entry name" value="PEP_carboxykinase_ATP"/>
</dbReference>
<dbReference type="InterPro" id="IPR013035">
    <property type="entry name" value="PEP_carboxykinase_C"/>
</dbReference>
<dbReference type="InterPro" id="IPR008210">
    <property type="entry name" value="PEP_carboxykinase_N"/>
</dbReference>
<dbReference type="InterPro" id="IPR015994">
    <property type="entry name" value="PEPCK_ATP_CS"/>
</dbReference>
<dbReference type="NCBIfam" id="TIGR00224">
    <property type="entry name" value="pckA"/>
    <property type="match status" value="1"/>
</dbReference>
<dbReference type="NCBIfam" id="NF006819">
    <property type="entry name" value="PRK09344.1-1"/>
    <property type="match status" value="1"/>
</dbReference>
<dbReference type="NCBIfam" id="NF006820">
    <property type="entry name" value="PRK09344.1-2"/>
    <property type="match status" value="1"/>
</dbReference>
<dbReference type="NCBIfam" id="NF006821">
    <property type="entry name" value="PRK09344.1-3"/>
    <property type="match status" value="1"/>
</dbReference>
<dbReference type="PANTHER" id="PTHR30031:SF0">
    <property type="entry name" value="PHOSPHOENOLPYRUVATE CARBOXYKINASE (ATP)"/>
    <property type="match status" value="1"/>
</dbReference>
<dbReference type="PANTHER" id="PTHR30031">
    <property type="entry name" value="PHOSPHOENOLPYRUVATE CARBOXYKINASE ATP"/>
    <property type="match status" value="1"/>
</dbReference>
<dbReference type="Pfam" id="PF01293">
    <property type="entry name" value="PEPCK_ATP"/>
    <property type="match status" value="1"/>
</dbReference>
<dbReference type="PIRSF" id="PIRSF006294">
    <property type="entry name" value="PEP_crbxkin"/>
    <property type="match status" value="1"/>
</dbReference>
<dbReference type="SUPFAM" id="SSF68923">
    <property type="entry name" value="PEP carboxykinase N-terminal domain"/>
    <property type="match status" value="1"/>
</dbReference>
<dbReference type="SUPFAM" id="SSF53795">
    <property type="entry name" value="PEP carboxykinase-like"/>
    <property type="match status" value="1"/>
</dbReference>
<dbReference type="PROSITE" id="PS00532">
    <property type="entry name" value="PEPCK_ATP"/>
    <property type="match status" value="1"/>
</dbReference>
<protein>
    <recommendedName>
        <fullName evidence="1">Phosphoenolpyruvate carboxykinase (ATP)</fullName>
        <shortName evidence="1">PCK</shortName>
        <shortName evidence="1">PEP carboxykinase</shortName>
        <shortName evidence="1">PEPCK</shortName>
        <ecNumber evidence="1">4.1.1.49</ecNumber>
    </recommendedName>
</protein>
<feature type="chain" id="PRO_1000206236" description="Phosphoenolpyruvate carboxykinase (ATP)">
    <location>
        <begin position="1"/>
        <end position="539"/>
    </location>
</feature>
<feature type="binding site" evidence="1">
    <location>
        <position position="64"/>
    </location>
    <ligand>
        <name>substrate</name>
    </ligand>
</feature>
<feature type="binding site" evidence="1">
    <location>
        <position position="206"/>
    </location>
    <ligand>
        <name>substrate</name>
    </ligand>
</feature>
<feature type="binding site" evidence="1">
    <location>
        <position position="212"/>
    </location>
    <ligand>
        <name>ATP</name>
        <dbReference type="ChEBI" id="CHEBI:30616"/>
    </ligand>
</feature>
<feature type="binding site" evidence="1">
    <location>
        <position position="212"/>
    </location>
    <ligand>
        <name>Mn(2+)</name>
        <dbReference type="ChEBI" id="CHEBI:29035"/>
    </ligand>
</feature>
<feature type="binding site" evidence="1">
    <location>
        <position position="212"/>
    </location>
    <ligand>
        <name>substrate</name>
    </ligand>
</feature>
<feature type="binding site" evidence="1">
    <location>
        <position position="231"/>
    </location>
    <ligand>
        <name>ATP</name>
        <dbReference type="ChEBI" id="CHEBI:30616"/>
    </ligand>
</feature>
<feature type="binding site" evidence="1">
    <location>
        <position position="231"/>
    </location>
    <ligand>
        <name>Mn(2+)</name>
        <dbReference type="ChEBI" id="CHEBI:29035"/>
    </ligand>
</feature>
<feature type="binding site" evidence="1">
    <location>
        <begin position="247"/>
        <end position="255"/>
    </location>
    <ligand>
        <name>ATP</name>
        <dbReference type="ChEBI" id="CHEBI:30616"/>
    </ligand>
</feature>
<feature type="binding site" evidence="1">
    <location>
        <position position="268"/>
    </location>
    <ligand>
        <name>Mn(2+)</name>
        <dbReference type="ChEBI" id="CHEBI:29035"/>
    </ligand>
</feature>
<feature type="binding site" evidence="1">
    <location>
        <position position="296"/>
    </location>
    <ligand>
        <name>ATP</name>
        <dbReference type="ChEBI" id="CHEBI:30616"/>
    </ligand>
</feature>
<feature type="binding site" evidence="1">
    <location>
        <position position="332"/>
    </location>
    <ligand>
        <name>ATP</name>
        <dbReference type="ChEBI" id="CHEBI:30616"/>
    </ligand>
</feature>
<feature type="binding site" evidence="1">
    <location>
        <position position="332"/>
    </location>
    <ligand>
        <name>substrate</name>
    </ligand>
</feature>
<feature type="binding site" evidence="1">
    <location>
        <begin position="448"/>
        <end position="449"/>
    </location>
    <ligand>
        <name>ATP</name>
        <dbReference type="ChEBI" id="CHEBI:30616"/>
    </ligand>
</feature>
<feature type="binding site" evidence="1">
    <location>
        <position position="454"/>
    </location>
    <ligand>
        <name>ATP</name>
        <dbReference type="ChEBI" id="CHEBI:30616"/>
    </ligand>
</feature>
<name>PCKA_EDWI9</name>
<accession>C5BGS4</accession>
<comment type="function">
    <text evidence="1">Involved in the gluconeogenesis. Catalyzes the conversion of oxaloacetate (OAA) to phosphoenolpyruvate (PEP) through direct phosphoryl transfer between the nucleoside triphosphate and OAA.</text>
</comment>
<comment type="catalytic activity">
    <reaction evidence="1">
        <text>oxaloacetate + ATP = phosphoenolpyruvate + ADP + CO2</text>
        <dbReference type="Rhea" id="RHEA:18617"/>
        <dbReference type="ChEBI" id="CHEBI:16452"/>
        <dbReference type="ChEBI" id="CHEBI:16526"/>
        <dbReference type="ChEBI" id="CHEBI:30616"/>
        <dbReference type="ChEBI" id="CHEBI:58702"/>
        <dbReference type="ChEBI" id="CHEBI:456216"/>
        <dbReference type="EC" id="4.1.1.49"/>
    </reaction>
</comment>
<comment type="cofactor">
    <cofactor evidence="1">
        <name>Mn(2+)</name>
        <dbReference type="ChEBI" id="CHEBI:29035"/>
    </cofactor>
    <text evidence="1">Binds 1 Mn(2+) ion per subunit.</text>
</comment>
<comment type="pathway">
    <text evidence="1">Carbohydrate biosynthesis; gluconeogenesis.</text>
</comment>
<comment type="subunit">
    <text evidence="1">Monomer.</text>
</comment>
<comment type="subcellular location">
    <subcellularLocation>
        <location evidence="1">Cytoplasm</location>
    </subcellularLocation>
</comment>
<comment type="similarity">
    <text evidence="1">Belongs to the phosphoenolpyruvate carboxykinase (ATP) family.</text>
</comment>
<sequence>MHAKGLTAADLASYGISDVTEIVHNPDYDLLFKEETAPGLQGYERGTVTSLGAVAVDTGIFTGRSPKDKYLVRDDTTRDTVWWSDQGKGKNDNRPLSPEVWQHLKGLVTRQLSNKRLFVVDAYCGANPDSRLKVRFITEVAWQAHFVKNMFIRPEADELAGFEPDFIVMNGAKCTNPQWQAQGLNSENFVAFNLTERIQLIGGTWYGGEMKKGMFSIMNYLLPLKGIASMHCSANVGEQGDVAIFFGLSGTGKTTLSTDPKRRLIGDDEHGWDDDGVFNFEGGCYAKTIKLSADAEPDIYGAITRDALLENVTVRADGSVDFDDGSKTENTRVSYPIYHIKNIVKPVSKAGAAKKVIFLTADAFGVLPPVSRLTADQTQYHFLSGFTAKLAGTERGVTEPTPTFSACFGAAFLTLHPTQYAEVLVRRMQAAGAQAYLVNTGWNGSGKRISIKDTRAIIDAILNGDIDRVETFTLPIFNLAVPIELPGVNPAILDPRDTYANREQWQEKAQDLAQRFITNFDKYTDTPAGAALVHAGPRR</sequence>
<keyword id="KW-0067">ATP-binding</keyword>
<keyword id="KW-0963">Cytoplasm</keyword>
<keyword id="KW-0210">Decarboxylase</keyword>
<keyword id="KW-0312">Gluconeogenesis</keyword>
<keyword id="KW-0456">Lyase</keyword>
<keyword id="KW-0464">Manganese</keyword>
<keyword id="KW-0479">Metal-binding</keyword>
<keyword id="KW-0547">Nucleotide-binding</keyword>
<organism>
    <name type="scientific">Edwardsiella ictaluri (strain 93-146)</name>
    <dbReference type="NCBI Taxonomy" id="634503"/>
    <lineage>
        <taxon>Bacteria</taxon>
        <taxon>Pseudomonadati</taxon>
        <taxon>Pseudomonadota</taxon>
        <taxon>Gammaproteobacteria</taxon>
        <taxon>Enterobacterales</taxon>
        <taxon>Hafniaceae</taxon>
        <taxon>Edwardsiella</taxon>
    </lineage>
</organism>